<keyword id="KW-0106">Calcium</keyword>
<keyword id="KW-0130">Cell adhesion</keyword>
<keyword id="KW-1003">Cell membrane</keyword>
<keyword id="KW-1015">Disulfide bond</keyword>
<keyword id="KW-0325">Glycoprotein</keyword>
<keyword id="KW-0472">Membrane</keyword>
<keyword id="KW-0479">Metal-binding</keyword>
<keyword id="KW-1185">Reference proteome</keyword>
<keyword id="KW-0677">Repeat</keyword>
<keyword id="KW-0732">Signal</keyword>
<keyword id="KW-0812">Transmembrane</keyword>
<keyword id="KW-1133">Transmembrane helix</keyword>
<sequence length="947" mass="102366">MEFSWGSGQESRRLLLLLLLLSAWEAGNGQLHYSVSEEAKHGTFVGRIAQDLGLELAELVPRLFRVASKGRGGLLEVNLQNGILFVNSRIDREELCRRSAECSIHLEVIVDRPLQVFHVDVEVRDINDNPPVFPATQKNLSIAESRPLDSRFPLEGASDADIGENALLTYRLSPNEYFSLEKPSDDELVKGLGLILRKSLDREEAPEIFLVLTATDGGKPELTGTVQLLITVLDANDNAPAFDRTIYKVRLLENVPNGTLVIKLNASDLDEGLNGDIIYSFSNDISPNVKSKFHIDPITGQIIVKGYIDFEESKSYEIIVEGIDKGQLPLSGHCRVIVEVEDNNDNVPDLEFKSLSLPIREDAPLGTVIALISVSDKDMGVNGLVTCSLTSHVPFKLVSTFKNYYSLVLDSALDRESVSAYELVVTARDGGSPSLWATASVSVEVADVNDNAPAFAQPEYTVFVKENNPPGCHIFTVSAWDADAQENALVSYSLVERRVGERALSSYVSVHAESGKVYALQPLDHEELELLQFQVTARDAGVPPLGSNVTLQVFVLDENDNAPALLAHRAGGTGGAVSELVPWSVGVDHVVAKVRAVDADSGYNAWLSYELQPGTGGARIPFRVGLYTGEISTTRALDETDAPRHRLLVLVKDHGEPALTATATVLVSLVESGQAPKASSRALVGAVGPDAALVDVNVYLIIAICAVSSLLVLTLLLYTALRCSAPPTEGACAPGKPTLVCSSAVGSWSYSQQRRPRVCSGEGPPKTDLMAFSPSLPDSRDREDELQTTEESFAKPRQPNPDWRYSASLRAGMHSSVHLEEAGILRAGPGGPDQQWPTVSSATPEPEAGEVSPPVGAGVNSNSWTFKYGPGNPKQSGPGELPDKFIIPGSPAIISIRQEPANSQIDKSDFITFGKKEETKKKKKKKKGNKTQEKKEKGNSTTDNSDQ</sequence>
<name>PCDA4_PANTR</name>
<organism>
    <name type="scientific">Pan troglodytes</name>
    <name type="common">Chimpanzee</name>
    <dbReference type="NCBI Taxonomy" id="9598"/>
    <lineage>
        <taxon>Eukaryota</taxon>
        <taxon>Metazoa</taxon>
        <taxon>Chordata</taxon>
        <taxon>Craniata</taxon>
        <taxon>Vertebrata</taxon>
        <taxon>Euteleostomi</taxon>
        <taxon>Mammalia</taxon>
        <taxon>Eutheria</taxon>
        <taxon>Euarchontoglires</taxon>
        <taxon>Primates</taxon>
        <taxon>Haplorrhini</taxon>
        <taxon>Catarrhini</taxon>
        <taxon>Hominidae</taxon>
        <taxon>Pan</taxon>
    </lineage>
</organism>
<feature type="signal peptide" evidence="2">
    <location>
        <begin position="1"/>
        <end position="29"/>
    </location>
</feature>
<feature type="chain" id="PRO_0000003891" description="Protocadherin alpha-4">
    <location>
        <begin position="30"/>
        <end position="947"/>
    </location>
</feature>
<feature type="topological domain" description="Extracellular" evidence="1">
    <location>
        <begin position="30"/>
        <end position="697"/>
    </location>
</feature>
<feature type="transmembrane region" description="Helical" evidence="2">
    <location>
        <begin position="698"/>
        <end position="718"/>
    </location>
</feature>
<feature type="topological domain" description="Cytoplasmic" evidence="1">
    <location>
        <begin position="719"/>
        <end position="947"/>
    </location>
</feature>
<feature type="domain" description="Cadherin 1" evidence="3">
    <location>
        <begin position="30"/>
        <end position="133"/>
    </location>
</feature>
<feature type="domain" description="Cadherin 2" evidence="3">
    <location>
        <begin position="134"/>
        <end position="242"/>
    </location>
</feature>
<feature type="domain" description="Cadherin 3" evidence="3">
    <location>
        <begin position="243"/>
        <end position="350"/>
    </location>
</feature>
<feature type="domain" description="Cadherin 4" evidence="3">
    <location>
        <begin position="351"/>
        <end position="455"/>
    </location>
</feature>
<feature type="domain" description="Cadherin 5" evidence="3">
    <location>
        <begin position="456"/>
        <end position="565"/>
    </location>
</feature>
<feature type="domain" description="Cadherin 6" evidence="3">
    <location>
        <begin position="588"/>
        <end position="678"/>
    </location>
</feature>
<feature type="repeat" description="PXXP 1">
    <location>
        <begin position="734"/>
        <end position="737"/>
    </location>
</feature>
<feature type="repeat" description="PXXP 2">
    <location>
        <begin position="774"/>
        <end position="777"/>
    </location>
</feature>
<feature type="repeat" description="PXXP 3">
    <location>
        <begin position="796"/>
        <end position="799"/>
    </location>
</feature>
<feature type="repeat" description="PXXP 4">
    <location>
        <begin position="829"/>
        <end position="832"/>
    </location>
</feature>
<feature type="repeat" description="PXXP 5">
    <location>
        <begin position="870"/>
        <end position="873"/>
    </location>
</feature>
<feature type="repeat" description="PXXP 6">
    <location>
        <begin position="888"/>
        <end position="891"/>
    </location>
</feature>
<feature type="region of interest" description="6 X 4 AA repeats of P-X-X-P">
    <location>
        <begin position="734"/>
        <end position="891"/>
    </location>
</feature>
<feature type="region of interest" description="Required for interaction with FYN" evidence="1">
    <location>
        <begin position="738"/>
        <end position="947"/>
    </location>
</feature>
<feature type="region of interest" description="Disordered" evidence="4">
    <location>
        <begin position="754"/>
        <end position="805"/>
    </location>
</feature>
<feature type="region of interest" description="Disordered" evidence="4">
    <location>
        <begin position="828"/>
        <end position="853"/>
    </location>
</feature>
<feature type="region of interest" description="Disordered" evidence="4">
    <location>
        <begin position="892"/>
        <end position="947"/>
    </location>
</feature>
<feature type="compositionally biased region" description="Basic and acidic residues" evidence="4">
    <location>
        <begin position="906"/>
        <end position="920"/>
    </location>
</feature>
<feature type="glycosylation site" description="N-linked (GlcNAc...) asparagine" evidence="2">
    <location>
        <position position="139"/>
    </location>
</feature>
<feature type="glycosylation site" description="N-linked (GlcNAc...) asparagine" evidence="2">
    <location>
        <position position="257"/>
    </location>
</feature>
<feature type="glycosylation site" description="N-linked (GlcNAc...) asparagine" evidence="2">
    <location>
        <position position="265"/>
    </location>
</feature>
<feature type="glycosylation site" description="N-linked (GlcNAc...) asparagine" evidence="2">
    <location>
        <position position="548"/>
    </location>
</feature>
<feature type="disulfide bond" evidence="1">
    <location>
        <begin position="96"/>
        <end position="102"/>
    </location>
</feature>
<protein>
    <recommendedName>
        <fullName evidence="5">Protocadherin alpha-4</fullName>
        <shortName evidence="5">PCDH-alpha-4</shortName>
    </recommendedName>
</protein>
<comment type="function">
    <text evidence="1">Calcium-dependent cell-adhesion protein involved in cells self-recognition and non-self discrimination. Thereby, it is involved in the establishment and maintenance of specific neuronal connections in the brain.</text>
</comment>
<comment type="subunit">
    <text evidence="1">Forms homodimers in trans (molecules expressed by two different cells). Forms promiscuous heterodimers in cis (at the plasma membrane of the same cell) with other protocadherins. Interacts with FYN.</text>
</comment>
<comment type="subcellular location">
    <subcellularLocation>
        <location evidence="1">Cell membrane</location>
        <topology evidence="1">Single-pass type I membrane protein</topology>
    </subcellularLocation>
    <text evidence="1">Detected in dendrites and synapses.</text>
</comment>
<comment type="domain">
    <text evidence="1">Cadherin 1 to cadherin 4 domains mediate homophilic trans-interaction, the interaction with an identical protocadherin expressed by a neighboring cell. This is a head-to-tail interaction, the cadherin 1 domain interacting with the cadherin 4 domain and the cadherin 2 domain interacting the cadherin 3 domain of the other protocadherin. The cadherin 6 domain mediates promiscuous interactions with protocadherins on the same cell membrane. Each cadherin domain binds three calcium ions.</text>
</comment>
<proteinExistence type="inferred from homology"/>
<evidence type="ECO:0000250" key="1">
    <source>
        <dbReference type="UniProtKB" id="O88689"/>
    </source>
</evidence>
<evidence type="ECO:0000255" key="2"/>
<evidence type="ECO:0000255" key="3">
    <source>
        <dbReference type="PROSITE-ProRule" id="PRU00043"/>
    </source>
</evidence>
<evidence type="ECO:0000256" key="4">
    <source>
        <dbReference type="SAM" id="MobiDB-lite"/>
    </source>
</evidence>
<evidence type="ECO:0000305" key="5"/>
<accession>Q5DRE8</accession>
<gene>
    <name evidence="1" type="primary">PCDHA4</name>
</gene>
<reference key="1">
    <citation type="journal article" date="2005" name="Nature">
        <title>Initial sequence of the chimpanzee genome and comparison with the human genome.</title>
        <authorList>
            <consortium name="Chimpanzee sequencing and analysis consortium"/>
        </authorList>
    </citation>
    <scope>NUCLEOTIDE SEQUENCE [LARGE SCALE GENOMIC DNA]</scope>
</reference>
<reference key="2">
    <citation type="journal article" date="2005" name="Genetics">
        <title>Comparative genomics and diversifying selection of the clustered vertebrate protocadherin genes.</title>
        <authorList>
            <person name="Wu Q."/>
        </authorList>
    </citation>
    <scope>IDENTIFICATION</scope>
</reference>
<dbReference type="SMR" id="Q5DRE8"/>
<dbReference type="FunCoup" id="Q5DRE8">
    <property type="interactions" value="74"/>
</dbReference>
<dbReference type="GlyCosmos" id="Q5DRE8">
    <property type="glycosylation" value="4 sites, No reported glycans"/>
</dbReference>
<dbReference type="InParanoid" id="Q5DRE8"/>
<dbReference type="Proteomes" id="UP000002277">
    <property type="component" value="Unplaced"/>
</dbReference>
<dbReference type="GO" id="GO:0005886">
    <property type="term" value="C:plasma membrane"/>
    <property type="evidence" value="ECO:0000318"/>
    <property type="project" value="GO_Central"/>
</dbReference>
<dbReference type="GO" id="GO:0005509">
    <property type="term" value="F:calcium ion binding"/>
    <property type="evidence" value="ECO:0000250"/>
    <property type="project" value="UniProtKB"/>
</dbReference>
<dbReference type="GO" id="GO:0042802">
    <property type="term" value="F:identical protein binding"/>
    <property type="evidence" value="ECO:0000250"/>
    <property type="project" value="UniProtKB"/>
</dbReference>
<dbReference type="GO" id="GO:0007155">
    <property type="term" value="P:cell adhesion"/>
    <property type="evidence" value="ECO:0000318"/>
    <property type="project" value="GO_Central"/>
</dbReference>
<dbReference type="GO" id="GO:0007156">
    <property type="term" value="P:homophilic cell adhesion via plasma membrane adhesion molecules"/>
    <property type="evidence" value="ECO:0007669"/>
    <property type="project" value="InterPro"/>
</dbReference>
<dbReference type="GO" id="GO:0007399">
    <property type="term" value="P:nervous system development"/>
    <property type="evidence" value="ECO:0007669"/>
    <property type="project" value="UniProtKB-ARBA"/>
</dbReference>
<dbReference type="CDD" id="cd11304">
    <property type="entry name" value="Cadherin_repeat"/>
    <property type="match status" value="6"/>
</dbReference>
<dbReference type="FunFam" id="2.60.40.60:FF:000001">
    <property type="entry name" value="Protocadherin alpha 2"/>
    <property type="match status" value="1"/>
</dbReference>
<dbReference type="FunFam" id="2.60.40.60:FF:000002">
    <property type="entry name" value="Protocadherin alpha 2"/>
    <property type="match status" value="1"/>
</dbReference>
<dbReference type="FunFam" id="2.60.40.60:FF:000003">
    <property type="entry name" value="Protocadherin alpha 2"/>
    <property type="match status" value="1"/>
</dbReference>
<dbReference type="FunFam" id="2.60.40.60:FF:000006">
    <property type="entry name" value="Protocadherin alpha 2"/>
    <property type="match status" value="1"/>
</dbReference>
<dbReference type="FunFam" id="2.60.40.60:FF:000007">
    <property type="entry name" value="Protocadherin alpha 2"/>
    <property type="match status" value="1"/>
</dbReference>
<dbReference type="FunFam" id="2.60.40.60:FF:000076">
    <property type="entry name" value="Protocadherin alpha 2"/>
    <property type="match status" value="1"/>
</dbReference>
<dbReference type="Gene3D" id="2.60.40.60">
    <property type="entry name" value="Cadherins"/>
    <property type="match status" value="6"/>
</dbReference>
<dbReference type="InterPro" id="IPR002126">
    <property type="entry name" value="Cadherin-like_dom"/>
</dbReference>
<dbReference type="InterPro" id="IPR015919">
    <property type="entry name" value="Cadherin-like_sf"/>
</dbReference>
<dbReference type="InterPro" id="IPR031904">
    <property type="entry name" value="Cadherin_CBD"/>
</dbReference>
<dbReference type="InterPro" id="IPR020894">
    <property type="entry name" value="Cadherin_CS"/>
</dbReference>
<dbReference type="InterPro" id="IPR013164">
    <property type="entry name" value="Cadherin_N"/>
</dbReference>
<dbReference type="InterPro" id="IPR050174">
    <property type="entry name" value="Protocadherin/Cadherin-CA"/>
</dbReference>
<dbReference type="PANTHER" id="PTHR24028">
    <property type="entry name" value="CADHERIN-87A"/>
    <property type="match status" value="1"/>
</dbReference>
<dbReference type="PANTHER" id="PTHR24028:SF133">
    <property type="entry name" value="PROTOCADHERIN ALPHA-4"/>
    <property type="match status" value="1"/>
</dbReference>
<dbReference type="Pfam" id="PF00028">
    <property type="entry name" value="Cadherin"/>
    <property type="match status" value="5"/>
</dbReference>
<dbReference type="Pfam" id="PF08266">
    <property type="entry name" value="Cadherin_2"/>
    <property type="match status" value="1"/>
</dbReference>
<dbReference type="Pfam" id="PF15974">
    <property type="entry name" value="Cadherin_tail"/>
    <property type="match status" value="1"/>
</dbReference>
<dbReference type="PRINTS" id="PR00205">
    <property type="entry name" value="CADHERIN"/>
</dbReference>
<dbReference type="SMART" id="SM00112">
    <property type="entry name" value="CA"/>
    <property type="match status" value="6"/>
</dbReference>
<dbReference type="SUPFAM" id="SSF49313">
    <property type="entry name" value="Cadherin-like"/>
    <property type="match status" value="6"/>
</dbReference>
<dbReference type="PROSITE" id="PS00232">
    <property type="entry name" value="CADHERIN_1"/>
    <property type="match status" value="5"/>
</dbReference>
<dbReference type="PROSITE" id="PS50268">
    <property type="entry name" value="CADHERIN_2"/>
    <property type="match status" value="6"/>
</dbReference>